<protein>
    <recommendedName>
        <fullName evidence="1">Probable lipid kinase YegS</fullName>
        <ecNumber evidence="1">2.7.1.-</ecNumber>
    </recommendedName>
</protein>
<sequence>MANFPASLLILNGKSADNQPLREAITLLRDEGIQIHVRVTWEKGDAQRYVDEARRLGVETVIAGGGDGTINEVSTALIQIRDGVAPALGLLPLGTANDFATSAGIPEALDKALKLAIAGNAMEIDMAMVNDKTCFINMATGGFGTRITTETPEKLKAALGGVSYLIHGLMRMDTLTPDRCEIRGENFHWQGDALVIGIGNGRQAGGGQQLCPTALINDGLLQLRIFTGEELLPALFSTLTQSDDNPNIIDGASAWFDIHAPHEITFNLDGEPLSGQEFHIEVLPGALRCRLPPDCPLLR</sequence>
<reference key="1">
    <citation type="journal article" date="2011" name="J. Bacteriol.">
        <title>Comparative genomics of 28 Salmonella enterica isolates: evidence for CRISPR-mediated adaptive sublineage evolution.</title>
        <authorList>
            <person name="Fricke W.F."/>
            <person name="Mammel M.K."/>
            <person name="McDermott P.F."/>
            <person name="Tartera C."/>
            <person name="White D.G."/>
            <person name="Leclerc J.E."/>
            <person name="Ravel J."/>
            <person name="Cebula T.A."/>
        </authorList>
    </citation>
    <scope>NUCLEOTIDE SEQUENCE [LARGE SCALE GENOMIC DNA]</scope>
    <source>
        <strain>CT_02021853</strain>
    </source>
</reference>
<keyword id="KW-0067">ATP-binding</keyword>
<keyword id="KW-0963">Cytoplasm</keyword>
<keyword id="KW-0418">Kinase</keyword>
<keyword id="KW-0444">Lipid biosynthesis</keyword>
<keyword id="KW-0443">Lipid metabolism</keyword>
<keyword id="KW-0460">Magnesium</keyword>
<keyword id="KW-0479">Metal-binding</keyword>
<keyword id="KW-0547">Nucleotide-binding</keyword>
<keyword id="KW-0594">Phospholipid biosynthesis</keyword>
<keyword id="KW-1208">Phospholipid metabolism</keyword>
<keyword id="KW-0808">Transferase</keyword>
<dbReference type="EC" id="2.7.1.-" evidence="1"/>
<dbReference type="EMBL" id="CP001144">
    <property type="protein sequence ID" value="ACH73855.1"/>
    <property type="molecule type" value="Genomic_DNA"/>
</dbReference>
<dbReference type="RefSeq" id="WP_001273389.1">
    <property type="nucleotide sequence ID" value="NC_011205.1"/>
</dbReference>
<dbReference type="SMR" id="B5FMV6"/>
<dbReference type="KEGG" id="sed:SeD_A2484"/>
<dbReference type="HOGENOM" id="CLU_045532_1_1_6"/>
<dbReference type="Proteomes" id="UP000008322">
    <property type="component" value="Chromosome"/>
</dbReference>
<dbReference type="GO" id="GO:0005737">
    <property type="term" value="C:cytoplasm"/>
    <property type="evidence" value="ECO:0007669"/>
    <property type="project" value="UniProtKB-SubCell"/>
</dbReference>
<dbReference type="GO" id="GO:0005886">
    <property type="term" value="C:plasma membrane"/>
    <property type="evidence" value="ECO:0007669"/>
    <property type="project" value="TreeGrafter"/>
</dbReference>
<dbReference type="GO" id="GO:0005524">
    <property type="term" value="F:ATP binding"/>
    <property type="evidence" value="ECO:0007669"/>
    <property type="project" value="UniProtKB-UniRule"/>
</dbReference>
<dbReference type="GO" id="GO:0001727">
    <property type="term" value="F:lipid kinase activity"/>
    <property type="evidence" value="ECO:0007669"/>
    <property type="project" value="UniProtKB-UniRule"/>
</dbReference>
<dbReference type="GO" id="GO:0000287">
    <property type="term" value="F:magnesium ion binding"/>
    <property type="evidence" value="ECO:0007669"/>
    <property type="project" value="UniProtKB-UniRule"/>
</dbReference>
<dbReference type="GO" id="GO:0008654">
    <property type="term" value="P:phospholipid biosynthetic process"/>
    <property type="evidence" value="ECO:0007669"/>
    <property type="project" value="UniProtKB-UniRule"/>
</dbReference>
<dbReference type="FunFam" id="3.40.50.10330:FF:000008">
    <property type="entry name" value="Probable lipid kinase YegS"/>
    <property type="match status" value="1"/>
</dbReference>
<dbReference type="Gene3D" id="2.60.200.40">
    <property type="match status" value="1"/>
</dbReference>
<dbReference type="Gene3D" id="3.40.50.10330">
    <property type="entry name" value="Probable inorganic polyphosphate/atp-NAD kinase, domain 1"/>
    <property type="match status" value="1"/>
</dbReference>
<dbReference type="HAMAP" id="MF_01377">
    <property type="entry name" value="YegS"/>
    <property type="match status" value="1"/>
</dbReference>
<dbReference type="InterPro" id="IPR017438">
    <property type="entry name" value="ATP-NAD_kinase_N"/>
</dbReference>
<dbReference type="InterPro" id="IPR005218">
    <property type="entry name" value="Diacylglycerol/lipid_kinase"/>
</dbReference>
<dbReference type="InterPro" id="IPR001206">
    <property type="entry name" value="Diacylglycerol_kinase_cat_dom"/>
</dbReference>
<dbReference type="InterPro" id="IPR022433">
    <property type="entry name" value="Lip_kinase_YegS"/>
</dbReference>
<dbReference type="InterPro" id="IPR050187">
    <property type="entry name" value="Lipid_Phosphate_FormReg"/>
</dbReference>
<dbReference type="InterPro" id="IPR016064">
    <property type="entry name" value="NAD/diacylglycerol_kinase_sf"/>
</dbReference>
<dbReference type="InterPro" id="IPR045540">
    <property type="entry name" value="YegS/DAGK_C"/>
</dbReference>
<dbReference type="NCBIfam" id="TIGR03702">
    <property type="entry name" value="lip_kinase_YegS"/>
    <property type="match status" value="1"/>
</dbReference>
<dbReference type="NCBIfam" id="NF009602">
    <property type="entry name" value="PRK13054.1"/>
    <property type="match status" value="1"/>
</dbReference>
<dbReference type="NCBIfam" id="TIGR00147">
    <property type="entry name" value="YegS/Rv2252/BmrU family lipid kinase"/>
    <property type="match status" value="1"/>
</dbReference>
<dbReference type="PANTHER" id="PTHR12358:SF106">
    <property type="entry name" value="LIPID KINASE YEGS"/>
    <property type="match status" value="1"/>
</dbReference>
<dbReference type="PANTHER" id="PTHR12358">
    <property type="entry name" value="SPHINGOSINE KINASE"/>
    <property type="match status" value="1"/>
</dbReference>
<dbReference type="Pfam" id="PF00781">
    <property type="entry name" value="DAGK_cat"/>
    <property type="match status" value="1"/>
</dbReference>
<dbReference type="Pfam" id="PF19279">
    <property type="entry name" value="YegS_C"/>
    <property type="match status" value="1"/>
</dbReference>
<dbReference type="SMART" id="SM00046">
    <property type="entry name" value="DAGKc"/>
    <property type="match status" value="1"/>
</dbReference>
<dbReference type="SUPFAM" id="SSF111331">
    <property type="entry name" value="NAD kinase/diacylglycerol kinase-like"/>
    <property type="match status" value="1"/>
</dbReference>
<dbReference type="PROSITE" id="PS50146">
    <property type="entry name" value="DAGK"/>
    <property type="match status" value="1"/>
</dbReference>
<comment type="function">
    <text evidence="1">Probably phosphorylates lipids; the in vivo substrate is unknown.</text>
</comment>
<comment type="cofactor">
    <cofactor evidence="1">
        <name>Mg(2+)</name>
        <dbReference type="ChEBI" id="CHEBI:18420"/>
    </cofactor>
    <cofactor evidence="1">
        <name>Ca(2+)</name>
        <dbReference type="ChEBI" id="CHEBI:29108"/>
    </cofactor>
    <text evidence="1">Binds 1 Mg(2+) ion per subunit. Ca(2+) may be able to substitute.</text>
</comment>
<comment type="subcellular location">
    <subcellularLocation>
        <location evidence="1">Cytoplasm</location>
    </subcellularLocation>
</comment>
<comment type="similarity">
    <text evidence="1">Belongs to the diacylglycerol/lipid kinase family. YegS lipid kinase subfamily.</text>
</comment>
<proteinExistence type="inferred from homology"/>
<name>YEGS_SALDC</name>
<evidence type="ECO:0000255" key="1">
    <source>
        <dbReference type="HAMAP-Rule" id="MF_01377"/>
    </source>
</evidence>
<accession>B5FMV6</accession>
<gene>
    <name evidence="1" type="primary">yegS</name>
    <name type="ordered locus">SeD_A2484</name>
</gene>
<organism>
    <name type="scientific">Salmonella dublin (strain CT_02021853)</name>
    <dbReference type="NCBI Taxonomy" id="439851"/>
    <lineage>
        <taxon>Bacteria</taxon>
        <taxon>Pseudomonadati</taxon>
        <taxon>Pseudomonadota</taxon>
        <taxon>Gammaproteobacteria</taxon>
        <taxon>Enterobacterales</taxon>
        <taxon>Enterobacteriaceae</taxon>
        <taxon>Salmonella</taxon>
    </lineage>
</organism>
<feature type="chain" id="PRO_1000144873" description="Probable lipid kinase YegS">
    <location>
        <begin position="1"/>
        <end position="299"/>
    </location>
</feature>
<feature type="domain" description="DAGKc" evidence="1">
    <location>
        <begin position="2"/>
        <end position="133"/>
    </location>
</feature>
<feature type="active site" description="Proton acceptor" evidence="1">
    <location>
        <position position="271"/>
    </location>
</feature>
<feature type="binding site" evidence="1">
    <location>
        <position position="40"/>
    </location>
    <ligand>
        <name>ATP</name>
        <dbReference type="ChEBI" id="CHEBI:30616"/>
    </ligand>
</feature>
<feature type="binding site" evidence="1">
    <location>
        <begin position="66"/>
        <end position="72"/>
    </location>
    <ligand>
        <name>ATP</name>
        <dbReference type="ChEBI" id="CHEBI:30616"/>
    </ligand>
</feature>
<feature type="binding site" evidence="1">
    <location>
        <position position="95"/>
    </location>
    <ligand>
        <name>ATP</name>
        <dbReference type="ChEBI" id="CHEBI:30616"/>
    </ligand>
</feature>
<feature type="binding site" evidence="1">
    <location>
        <position position="215"/>
    </location>
    <ligand>
        <name>Mg(2+)</name>
        <dbReference type="ChEBI" id="CHEBI:18420"/>
    </ligand>
</feature>
<feature type="binding site" evidence="1">
    <location>
        <position position="218"/>
    </location>
    <ligand>
        <name>Mg(2+)</name>
        <dbReference type="ChEBI" id="CHEBI:18420"/>
    </ligand>
</feature>
<feature type="binding site" evidence="1">
    <location>
        <position position="220"/>
    </location>
    <ligand>
        <name>Mg(2+)</name>
        <dbReference type="ChEBI" id="CHEBI:18420"/>
    </ligand>
</feature>